<comment type="subcellular location">
    <subcellularLocation>
        <location evidence="1">Secreted</location>
    </subcellularLocation>
</comment>
<comment type="tissue specificity">
    <text>Expressed by the venom duct.</text>
</comment>
<comment type="miscellaneous">
    <text>The mature peptide does not contain cysteine residue.</text>
</comment>
<comment type="similarity">
    <text evidence="3">Belongs to the conotoxin T superfamily.</text>
</comment>
<protein>
    <recommendedName>
        <fullName>Conotoxin VnMLCL-031</fullName>
    </recommendedName>
</protein>
<accession>Q9BP53</accession>
<organism>
    <name type="scientific">Conus ventricosus</name>
    <name type="common">Mediterranean cone</name>
    <dbReference type="NCBI Taxonomy" id="117992"/>
    <lineage>
        <taxon>Eukaryota</taxon>
        <taxon>Metazoa</taxon>
        <taxon>Spiralia</taxon>
        <taxon>Lophotrochozoa</taxon>
        <taxon>Mollusca</taxon>
        <taxon>Gastropoda</taxon>
        <taxon>Caenogastropoda</taxon>
        <taxon>Neogastropoda</taxon>
        <taxon>Conoidea</taxon>
        <taxon>Conidae</taxon>
        <taxon>Conus</taxon>
        <taxon>Lautoconus</taxon>
    </lineage>
</organism>
<name>CT0C5_CONVE</name>
<feature type="signal peptide" evidence="2">
    <location>
        <begin position="1"/>
        <end position="19"/>
    </location>
</feature>
<feature type="propeptide" id="PRO_0000404991" evidence="2">
    <location>
        <begin position="20"/>
        <end position="43"/>
    </location>
</feature>
<feature type="peptide" id="PRO_0000404992" description="Conotoxin VnMLCL-031" evidence="2">
    <location>
        <begin position="46"/>
        <end position="64"/>
    </location>
</feature>
<feature type="modified residue" description="Isoleucine amide" evidence="1">
    <location>
        <position position="64"/>
    </location>
</feature>
<reference key="1">
    <citation type="journal article" date="2001" name="Mol. Biol. Evol.">
        <title>Mechanisms for evolving hypervariability: the case of conopeptides.</title>
        <authorList>
            <person name="Conticello S.G."/>
            <person name="Gilad Y."/>
            <person name="Avidan N."/>
            <person name="Ben-Asher E."/>
            <person name="Levy Z."/>
            <person name="Fainzilber M."/>
        </authorList>
    </citation>
    <scope>NUCLEOTIDE SEQUENCE [MRNA]</scope>
    <source>
        <tissue>Venom duct</tissue>
    </source>
</reference>
<sequence>MLCLPXFIILLLLASPAAPNPLQTRXQSNLIRAGPEDANIKTXKRVIISGLXXSILVPLIDAIIG</sequence>
<keyword id="KW-0027">Amidation</keyword>
<keyword id="KW-0165">Cleavage on pair of basic residues</keyword>
<keyword id="KW-0528">Neurotoxin</keyword>
<keyword id="KW-0964">Secreted</keyword>
<keyword id="KW-0732">Signal</keyword>
<keyword id="KW-0800">Toxin</keyword>
<proteinExistence type="evidence at transcript level"/>
<evidence type="ECO:0000250" key="1"/>
<evidence type="ECO:0000255" key="2"/>
<evidence type="ECO:0000305" key="3"/>
<dbReference type="EMBL" id="AF215095">
    <property type="protein sequence ID" value="AAG60516.1"/>
    <property type="molecule type" value="mRNA"/>
</dbReference>
<dbReference type="TCDB" id="8.B.4.3.3">
    <property type="family name" value="the conotoxin t (conotoxin t) family"/>
</dbReference>
<dbReference type="ConoServer" id="773">
    <property type="toxin name" value="VnMLCL-031"/>
</dbReference>
<dbReference type="GO" id="GO:0005576">
    <property type="term" value="C:extracellular region"/>
    <property type="evidence" value="ECO:0007669"/>
    <property type="project" value="UniProtKB-SubCell"/>
</dbReference>
<dbReference type="GO" id="GO:0090729">
    <property type="term" value="F:toxin activity"/>
    <property type="evidence" value="ECO:0007669"/>
    <property type="project" value="UniProtKB-KW"/>
</dbReference>